<sequence length="744" mass="83876">MVAVRSAHINKAGEFDPEKWIASLGITSQKSCECLAETWAYCLQQTQGHPDASLLLWRGVEMVEILSTLSMDIDTLRAALLFPLADANVVSEDVLRESVGKSVVNLIHGVRDMAAIRQLKATHTDSVSSEQVDNVRRMLLAMVDDFRCVVIKLAERIAHLREVKDAPEDERVLAAKECTNIYAPLANRLGIGQLKWELEDYCFRYLHPTEYKRIAKLLHERRLDREHYIEEFVGHLRAEMKAEGVKAEVYGRPKHIYSIWRKMQKKNLAFDELFDVRAVRIVAERLQDCYAALGIVHTHYRHLPDEFDDYVANPKPNGYQSIHTVVLGPGGKTVEIQIRTKQMHEDAELGVAAHWKYKEGAAAGGARSGHEDRIAWLRKLIAWQEEMADSGEMLDEVRSQVFDDRVYVFTPKGDVVDLPAGSTPLDFAYHIHSDVGHRCIGAKIGGRIVPFTYQLQMGDQIEIITQKQPNPSRDWLNPNLGYVTTSRGRSKIHAWFRKQDRDKNILAGRQILDDELEHLGISLKEAEKHLLPRYNFNDVDELLAAIGGGDIRLNQMVNFLQSQFNKPSAEEQDAAALKQLQQKSYTPQNRSKDNGRVVVEGVGNLMHHIARCCQPIPGDEIVGFITQGRGISVHRADCEQLAELRSHAPERIVDAVWGESYSAGYSLVVRVVANDRSGLLRDITTILANEKVNVLGVASRSDTKQQLATIDMTIEIYNLQVLGRVLGKLNQVPDVIDARRLHGS</sequence>
<comment type="function">
    <text evidence="4 5 6 7">In eubacteria ppGpp (guanosine 3'-diphosphate 5'-diphosphate) is a mediator of the stringent response which coordinates a variety of cellular activities in response to changes in nutritional abundance. This enzyme catalyzes the formation of pppGpp which is then hydrolyzed to form ppGpp. The second messengers ppGpp and c-di-GMP together control biofilm formation in response to translational stress; ppGpp represses biofilm formation while c-di-GMP induces it. ppGpp activates transcription of CsrA-antagonistic small RNAs CsrB and CsrC, which down-regulate CsrA's action on translation during the stringent response (PubMed:21488981).</text>
</comment>
<comment type="catalytic activity">
    <reaction>
        <text>GTP + ATP = guanosine 3'-diphosphate 5'-triphosphate + AMP</text>
        <dbReference type="Rhea" id="RHEA:22088"/>
        <dbReference type="ChEBI" id="CHEBI:30616"/>
        <dbReference type="ChEBI" id="CHEBI:37565"/>
        <dbReference type="ChEBI" id="CHEBI:142410"/>
        <dbReference type="ChEBI" id="CHEBI:456215"/>
        <dbReference type="EC" id="2.7.6.5"/>
    </reaction>
</comment>
<comment type="pathway">
    <text>Purine metabolism; ppGpp biosynthesis; ppGpp from GTP: step 1/2.</text>
</comment>
<comment type="disruption phenotype">
    <text evidence="4 5 6 7">A slight increase in biofilm formation in a csrA-disrupted background; when combined with a spoT disruption (a ppGpp0 mutant) there is a very large increase in biofilm formation (PubMed:19460094). The ppGpp0 mutant makes decreased levels of CsrA and its inhibitory small RNAs (sRNA) CsrB and CsrC (PubMed:21488981). Deletion of relA alone decreases persister cell formation in a hipA7 mutant; the double relA/spoT deletion obviates persister cell formation (PubMed:14622409, PubMed:26051177).</text>
</comment>
<comment type="similarity">
    <text evidence="8">Belongs to the RelA/SpoT family.</text>
</comment>
<dbReference type="EC" id="2.7.6.5"/>
<dbReference type="EMBL" id="J04039">
    <property type="protein sequence ID" value="AAA03237.1"/>
    <property type="molecule type" value="Unassigned_DNA"/>
</dbReference>
<dbReference type="EMBL" id="U29580">
    <property type="protein sequence ID" value="AAA69294.1"/>
    <property type="molecule type" value="Genomic_DNA"/>
</dbReference>
<dbReference type="EMBL" id="U00096">
    <property type="protein sequence ID" value="AAC75826.1"/>
    <property type="molecule type" value="Genomic_DNA"/>
</dbReference>
<dbReference type="EMBL" id="AP009048">
    <property type="protein sequence ID" value="BAE76858.1"/>
    <property type="molecule type" value="Genomic_DNA"/>
</dbReference>
<dbReference type="PIR" id="D65060">
    <property type="entry name" value="KIECG"/>
</dbReference>
<dbReference type="RefSeq" id="NP_417264.1">
    <property type="nucleotide sequence ID" value="NC_000913.3"/>
</dbReference>
<dbReference type="RefSeq" id="WP_000226815.1">
    <property type="nucleotide sequence ID" value="NZ_STEB01000030.1"/>
</dbReference>
<dbReference type="PDB" id="5IQR">
    <property type="method" value="EM"/>
    <property type="resolution" value="3.00 A"/>
    <property type="chains" value="8=1-744"/>
</dbReference>
<dbReference type="PDB" id="5KPS">
    <property type="method" value="EM"/>
    <property type="resolution" value="3.90 A"/>
    <property type="chains" value="A=2-744"/>
</dbReference>
<dbReference type="PDB" id="5KPV">
    <property type="method" value="EM"/>
    <property type="resolution" value="4.10 A"/>
    <property type="chains" value="33=2-744"/>
</dbReference>
<dbReference type="PDB" id="5KPW">
    <property type="method" value="EM"/>
    <property type="resolution" value="3.90 A"/>
    <property type="chains" value="33=2-744"/>
</dbReference>
<dbReference type="PDB" id="5KPX">
    <property type="method" value="EM"/>
    <property type="resolution" value="3.90 A"/>
    <property type="chains" value="33=2-744"/>
</dbReference>
<dbReference type="PDB" id="5L3P">
    <property type="method" value="EM"/>
    <property type="resolution" value="3.70 A"/>
    <property type="chains" value="z=1-744"/>
</dbReference>
<dbReference type="PDBsum" id="5IQR"/>
<dbReference type="PDBsum" id="5KPS"/>
<dbReference type="PDBsum" id="5KPV"/>
<dbReference type="PDBsum" id="5KPW"/>
<dbReference type="PDBsum" id="5KPX"/>
<dbReference type="PDBsum" id="5L3P"/>
<dbReference type="EMDB" id="EMD-8107"/>
<dbReference type="EMDB" id="EMD-8279"/>
<dbReference type="EMDB" id="EMD-8280"/>
<dbReference type="EMDB" id="EMD-8281"/>
<dbReference type="EMDB" id="EMD-8282"/>
<dbReference type="SMR" id="P0AG20"/>
<dbReference type="BioGRID" id="4259226">
    <property type="interactions" value="95"/>
</dbReference>
<dbReference type="DIP" id="DIP-10658N"/>
<dbReference type="FunCoup" id="P0AG20">
    <property type="interactions" value="366"/>
</dbReference>
<dbReference type="IntAct" id="P0AG20">
    <property type="interactions" value="62"/>
</dbReference>
<dbReference type="STRING" id="511145.b2784"/>
<dbReference type="ChEMBL" id="CHEMBL1163114"/>
<dbReference type="jPOST" id="P0AG20"/>
<dbReference type="PaxDb" id="511145-b2784"/>
<dbReference type="EnsemblBacteria" id="AAC75826">
    <property type="protein sequence ID" value="AAC75826"/>
    <property type="gene ID" value="b2784"/>
</dbReference>
<dbReference type="GeneID" id="93779214"/>
<dbReference type="GeneID" id="947244"/>
<dbReference type="KEGG" id="ecj:JW2755"/>
<dbReference type="KEGG" id="eco:b2784"/>
<dbReference type="PATRIC" id="fig|1411691.4.peg.3951"/>
<dbReference type="EchoBASE" id="EB0828"/>
<dbReference type="eggNOG" id="COG0317">
    <property type="taxonomic scope" value="Bacteria"/>
</dbReference>
<dbReference type="HOGENOM" id="CLU_012300_3_0_6"/>
<dbReference type="InParanoid" id="P0AG20"/>
<dbReference type="OMA" id="TEIGHNC"/>
<dbReference type="PhylomeDB" id="P0AG20"/>
<dbReference type="BioCyc" id="EcoCyc:RELA-MONOMER"/>
<dbReference type="BioCyc" id="MetaCyc:RELA-MONOMER"/>
<dbReference type="BRENDA" id="2.7.6.5">
    <property type="organism ID" value="2026"/>
</dbReference>
<dbReference type="UniPathway" id="UPA00908">
    <property type="reaction ID" value="UER00884"/>
</dbReference>
<dbReference type="PRO" id="PR:P0AG20"/>
<dbReference type="Proteomes" id="UP000000625">
    <property type="component" value="Chromosome"/>
</dbReference>
<dbReference type="GO" id="GO:0005524">
    <property type="term" value="F:ATP binding"/>
    <property type="evidence" value="ECO:0007669"/>
    <property type="project" value="UniProtKB-KW"/>
</dbReference>
<dbReference type="GO" id="GO:0005525">
    <property type="term" value="F:GTP binding"/>
    <property type="evidence" value="ECO:0007669"/>
    <property type="project" value="UniProtKB-KW"/>
</dbReference>
<dbReference type="GO" id="GO:0008728">
    <property type="term" value="F:GTP diphosphokinase activity"/>
    <property type="evidence" value="ECO:0000314"/>
    <property type="project" value="EcoCyc"/>
</dbReference>
<dbReference type="GO" id="GO:0008893">
    <property type="term" value="F:guanosine-3',5'-bis(diphosphate) 3'-diphosphatase activity"/>
    <property type="evidence" value="ECO:0000318"/>
    <property type="project" value="GO_Central"/>
</dbReference>
<dbReference type="GO" id="GO:0016301">
    <property type="term" value="F:kinase activity"/>
    <property type="evidence" value="ECO:0007669"/>
    <property type="project" value="UniProtKB-KW"/>
</dbReference>
<dbReference type="GO" id="GO:0015970">
    <property type="term" value="P:guanosine tetraphosphate biosynthetic process"/>
    <property type="evidence" value="ECO:0007669"/>
    <property type="project" value="UniProtKB-UniPathway"/>
</dbReference>
<dbReference type="GO" id="GO:0015969">
    <property type="term" value="P:guanosine tetraphosphate metabolic process"/>
    <property type="evidence" value="ECO:0000315"/>
    <property type="project" value="EcoCyc"/>
</dbReference>
<dbReference type="GO" id="GO:0015949">
    <property type="term" value="P:nucleobase-containing small molecule interconversion"/>
    <property type="evidence" value="ECO:0000314"/>
    <property type="project" value="EcoCyc"/>
</dbReference>
<dbReference type="GO" id="GO:0042594">
    <property type="term" value="P:response to starvation"/>
    <property type="evidence" value="ECO:0000318"/>
    <property type="project" value="GO_Central"/>
</dbReference>
<dbReference type="CDD" id="cd04876">
    <property type="entry name" value="ACT_RelA-SpoT"/>
    <property type="match status" value="1"/>
</dbReference>
<dbReference type="CDD" id="cd05399">
    <property type="entry name" value="NT_Rel-Spo_like"/>
    <property type="match status" value="1"/>
</dbReference>
<dbReference type="CDD" id="cd01668">
    <property type="entry name" value="TGS_RSH"/>
    <property type="match status" value="1"/>
</dbReference>
<dbReference type="FunFam" id="1.10.3210.10:FF:000007">
    <property type="entry name" value="GTP pyrophosphokinase"/>
    <property type="match status" value="1"/>
</dbReference>
<dbReference type="FunFam" id="3.10.20.30:FF:000002">
    <property type="entry name" value="GTP pyrophosphokinase (RelA/SpoT)"/>
    <property type="match status" value="1"/>
</dbReference>
<dbReference type="FunFam" id="3.30.460.10:FF:000001">
    <property type="entry name" value="GTP pyrophosphokinase RelA"/>
    <property type="match status" value="1"/>
</dbReference>
<dbReference type="FunFam" id="3.30.70.260:FF:000010">
    <property type="entry name" value="GTP pyrophosphokinase RelA"/>
    <property type="match status" value="1"/>
</dbReference>
<dbReference type="Gene3D" id="3.10.20.30">
    <property type="match status" value="1"/>
</dbReference>
<dbReference type="Gene3D" id="3.30.70.260">
    <property type="match status" value="1"/>
</dbReference>
<dbReference type="Gene3D" id="3.30.460.10">
    <property type="entry name" value="Beta Polymerase, domain 2"/>
    <property type="match status" value="1"/>
</dbReference>
<dbReference type="Gene3D" id="1.10.3210.10">
    <property type="entry name" value="Hypothetical protein af1432"/>
    <property type="match status" value="1"/>
</dbReference>
<dbReference type="InterPro" id="IPR045865">
    <property type="entry name" value="ACT-like_dom_sf"/>
</dbReference>
<dbReference type="InterPro" id="IPR002912">
    <property type="entry name" value="ACT_dom"/>
</dbReference>
<dbReference type="InterPro" id="IPR012675">
    <property type="entry name" value="Beta-grasp_dom_sf"/>
</dbReference>
<dbReference type="InterPro" id="IPR006674">
    <property type="entry name" value="HD_domain"/>
</dbReference>
<dbReference type="InterPro" id="IPR043519">
    <property type="entry name" value="NT_sf"/>
</dbReference>
<dbReference type="InterPro" id="IPR004811">
    <property type="entry name" value="RelA/Spo_fam"/>
</dbReference>
<dbReference type="InterPro" id="IPR045600">
    <property type="entry name" value="RelA/SpoT_AH_RIS"/>
</dbReference>
<dbReference type="InterPro" id="IPR007685">
    <property type="entry name" value="RelA_SpoT"/>
</dbReference>
<dbReference type="InterPro" id="IPR004095">
    <property type="entry name" value="TGS"/>
</dbReference>
<dbReference type="InterPro" id="IPR012676">
    <property type="entry name" value="TGS-like"/>
</dbReference>
<dbReference type="InterPro" id="IPR033655">
    <property type="entry name" value="TGS_RelA/SpoT"/>
</dbReference>
<dbReference type="NCBIfam" id="NF008124">
    <property type="entry name" value="PRK10872.1"/>
    <property type="match status" value="1"/>
</dbReference>
<dbReference type="NCBIfam" id="TIGR00691">
    <property type="entry name" value="spoT_relA"/>
    <property type="match status" value="1"/>
</dbReference>
<dbReference type="PANTHER" id="PTHR21262:SF31">
    <property type="entry name" value="GTP PYROPHOSPHOKINASE"/>
    <property type="match status" value="1"/>
</dbReference>
<dbReference type="PANTHER" id="PTHR21262">
    <property type="entry name" value="GUANOSINE-3',5'-BIS DIPHOSPHATE 3'-PYROPHOSPHOHYDROLASE"/>
    <property type="match status" value="1"/>
</dbReference>
<dbReference type="Pfam" id="PF13291">
    <property type="entry name" value="ACT_4"/>
    <property type="match status" value="1"/>
</dbReference>
<dbReference type="Pfam" id="PF13328">
    <property type="entry name" value="HD_4"/>
    <property type="match status" value="1"/>
</dbReference>
<dbReference type="Pfam" id="PF19296">
    <property type="entry name" value="RelA_AH_RIS"/>
    <property type="match status" value="1"/>
</dbReference>
<dbReference type="Pfam" id="PF04607">
    <property type="entry name" value="RelA_SpoT"/>
    <property type="match status" value="1"/>
</dbReference>
<dbReference type="Pfam" id="PF02824">
    <property type="entry name" value="TGS"/>
    <property type="match status" value="1"/>
</dbReference>
<dbReference type="SMART" id="SM00954">
    <property type="entry name" value="RelA_SpoT"/>
    <property type="match status" value="1"/>
</dbReference>
<dbReference type="SUPFAM" id="SSF55021">
    <property type="entry name" value="ACT-like"/>
    <property type="match status" value="1"/>
</dbReference>
<dbReference type="SUPFAM" id="SSF109604">
    <property type="entry name" value="HD-domain/PDEase-like"/>
    <property type="match status" value="1"/>
</dbReference>
<dbReference type="SUPFAM" id="SSF81301">
    <property type="entry name" value="Nucleotidyltransferase"/>
    <property type="match status" value="1"/>
</dbReference>
<dbReference type="SUPFAM" id="SSF81271">
    <property type="entry name" value="TGS-like"/>
    <property type="match status" value="1"/>
</dbReference>
<dbReference type="PROSITE" id="PS51671">
    <property type="entry name" value="ACT"/>
    <property type="match status" value="1"/>
</dbReference>
<dbReference type="PROSITE" id="PS51831">
    <property type="entry name" value="HD"/>
    <property type="match status" value="1"/>
</dbReference>
<dbReference type="PROSITE" id="PS51880">
    <property type="entry name" value="TGS"/>
    <property type="match status" value="1"/>
</dbReference>
<proteinExistence type="evidence at protein level"/>
<feature type="chain" id="PRO_0000166546" description="GTP pyrophosphokinase">
    <location>
        <begin position="1"/>
        <end position="744"/>
    </location>
</feature>
<feature type="domain" description="HD" evidence="2">
    <location>
        <begin position="55"/>
        <end position="160"/>
    </location>
</feature>
<feature type="domain" description="TGS" evidence="3">
    <location>
        <begin position="404"/>
        <end position="465"/>
    </location>
</feature>
<feature type="domain" description="ACT" evidence="1">
    <location>
        <begin position="668"/>
        <end position="743"/>
    </location>
</feature>
<feature type="sequence conflict" description="In Ref. 1; AAA03237." evidence="8" ref="1">
    <original>F</original>
    <variation>K</variation>
    <location>
        <position position="307"/>
    </location>
</feature>
<name>RELA_ECOLI</name>
<organism>
    <name type="scientific">Escherichia coli (strain K12)</name>
    <dbReference type="NCBI Taxonomy" id="83333"/>
    <lineage>
        <taxon>Bacteria</taxon>
        <taxon>Pseudomonadati</taxon>
        <taxon>Pseudomonadota</taxon>
        <taxon>Gammaproteobacteria</taxon>
        <taxon>Enterobacterales</taxon>
        <taxon>Enterobacteriaceae</taxon>
        <taxon>Escherichia</taxon>
    </lineage>
</organism>
<reference key="1">
    <citation type="journal article" date="1988" name="J. Biol. Chem.">
        <title>The nucleotide sequence and characterization of the relA gene of Escherichia coli.</title>
        <authorList>
            <person name="Metzger S."/>
            <person name="Dror I.B."/>
            <person name="Aizenman E."/>
            <person name="Schreiber G."/>
            <person name="Toone M."/>
            <person name="Friesen J.D."/>
            <person name="Cashel M."/>
            <person name="Glaser G."/>
        </authorList>
    </citation>
    <scope>NUCLEOTIDE SEQUENCE [GENOMIC DNA]</scope>
    <source>
        <strain>K12</strain>
    </source>
</reference>
<reference key="2">
    <citation type="journal article" date="1997" name="Science">
        <title>The complete genome sequence of Escherichia coli K-12.</title>
        <authorList>
            <person name="Blattner F.R."/>
            <person name="Plunkett G. III"/>
            <person name="Bloch C.A."/>
            <person name="Perna N.T."/>
            <person name="Burland V."/>
            <person name="Riley M."/>
            <person name="Collado-Vides J."/>
            <person name="Glasner J.D."/>
            <person name="Rode C.K."/>
            <person name="Mayhew G.F."/>
            <person name="Gregor J."/>
            <person name="Davis N.W."/>
            <person name="Kirkpatrick H.A."/>
            <person name="Goeden M.A."/>
            <person name="Rose D.J."/>
            <person name="Mau B."/>
            <person name="Shao Y."/>
        </authorList>
    </citation>
    <scope>NUCLEOTIDE SEQUENCE [LARGE SCALE GENOMIC DNA]</scope>
    <source>
        <strain>K12 / MG1655 / ATCC 47076</strain>
    </source>
</reference>
<reference key="3">
    <citation type="journal article" date="2006" name="Mol. Syst. Biol.">
        <title>Highly accurate genome sequences of Escherichia coli K-12 strains MG1655 and W3110.</title>
        <authorList>
            <person name="Hayashi K."/>
            <person name="Morooka N."/>
            <person name="Yamamoto Y."/>
            <person name="Fujita K."/>
            <person name="Isono K."/>
            <person name="Choi S."/>
            <person name="Ohtsubo E."/>
            <person name="Baba T."/>
            <person name="Wanner B.L."/>
            <person name="Mori H."/>
            <person name="Horiuchi T."/>
        </authorList>
    </citation>
    <scope>NUCLEOTIDE SEQUENCE [LARGE SCALE GENOMIC DNA]</scope>
    <source>
        <strain>K12 / W3110 / ATCC 27325 / DSM 5911</strain>
    </source>
</reference>
<reference key="4">
    <citation type="journal article" date="2003" name="Mol. Microbiol.">
        <title>Characterization of the hipA7 allele of Escherichia coli and evidence that high persistence is governed by (p)ppGpp synthesis.</title>
        <authorList>
            <person name="Korch S.B."/>
            <person name="Henderson T.A."/>
            <person name="Hill T.M."/>
        </authorList>
    </citation>
    <scope>FUNCTION IN PERSISTENCE</scope>
    <scope>DISRUPTION PHENOTYPE</scope>
    <source>
        <strain>K12 / MG1655 / ATCC 47076</strain>
    </source>
</reference>
<reference key="5">
    <citation type="journal article" date="2009" name="Mol. Microbiol.">
        <title>Second messenger signalling governs Escherichia coli biofilm induction upon ribosomal stress.</title>
        <authorList>
            <person name="Boehm A."/>
            <person name="Steiner S."/>
            <person name="Zaehringer F."/>
            <person name="Casanova A."/>
            <person name="Hamburger F."/>
            <person name="Ritz D."/>
            <person name="Keck W."/>
            <person name="Ackermann M."/>
            <person name="Schirmer T."/>
            <person name="Jenal U."/>
        </authorList>
    </citation>
    <scope>FUNCTION IN BIOFILM FORMATION</scope>
    <scope>DISRUPTION PHENOTYPE</scope>
    <source>
        <strain>K12 / MG1655 / AB400</strain>
    </source>
</reference>
<reference key="6">
    <citation type="journal article" date="2011" name="Mol. Microbiol.">
        <title>Circuitry linking the Csr and stringent response global regulatory systems.</title>
        <authorList>
            <person name="Edwards A.N."/>
            <person name="Patterson-Fortin L.M."/>
            <person name="Vakulskas C.A."/>
            <person name="Mercante J.W."/>
            <person name="Potrykus K."/>
            <person name="Vinella D."/>
            <person name="Camacho M.I."/>
            <person name="Fields J.A."/>
            <person name="Thompson S.A."/>
            <person name="Georgellis D."/>
            <person name="Cashel M."/>
            <person name="Babitzke P."/>
            <person name="Romeo T."/>
        </authorList>
    </citation>
    <scope>FUNCTION</scope>
    <scope>DISRUPTION PHENOTYPE</scope>
    <source>
        <strain>K12 / CF7789</strain>
        <strain>K12 / MG1655 / ATCC 47076</strain>
    </source>
</reference>
<reference key="7">
    <citation type="journal article" date="2015" name="Mol. Cell">
        <title>Obg and membrane depolarization are part of a microbial bet-hedging strategy that leads to antibiotic tolerance.</title>
        <authorList>
            <person name="Verstraeten N."/>
            <person name="Knapen W.J."/>
            <person name="Kint C.I."/>
            <person name="Liebens V."/>
            <person name="Van den Bergh B."/>
            <person name="Dewachter L."/>
            <person name="Michiels J.E."/>
            <person name="Fu Q."/>
            <person name="David C.C."/>
            <person name="Fierro A.C."/>
            <person name="Marchal K."/>
            <person name="Beirlant J."/>
            <person name="Versees W."/>
            <person name="Hofkens J."/>
            <person name="Jansen M."/>
            <person name="Fauvart M."/>
            <person name="Michiels J."/>
        </authorList>
    </citation>
    <scope>FUNCTION IN PERSISTENCE</scope>
    <scope>DISRUPTION PHENOTYPE</scope>
    <source>
        <strain>K12 / BW25113</strain>
    </source>
</reference>
<keyword id="KW-0002">3D-structure</keyword>
<keyword id="KW-0067">ATP-binding</keyword>
<keyword id="KW-0342">GTP-binding</keyword>
<keyword id="KW-0418">Kinase</keyword>
<keyword id="KW-0547">Nucleotide-binding</keyword>
<keyword id="KW-1185">Reference proteome</keyword>
<keyword id="KW-0808">Transferase</keyword>
<accession>P0AG20</accession>
<accession>P11585</accession>
<accession>Q2MA48</accession>
<protein>
    <recommendedName>
        <fullName>GTP pyrophosphokinase</fullName>
        <ecNumber>2.7.6.5</ecNumber>
    </recommendedName>
    <alternativeName>
        <fullName>(p)ppGpp synthase</fullName>
    </alternativeName>
    <alternativeName>
        <fullName>ATP:GTP 3'-pyrophosphotransferase</fullName>
    </alternativeName>
    <alternativeName>
        <fullName>ppGpp synthase I</fullName>
    </alternativeName>
</protein>
<evidence type="ECO:0000255" key="1">
    <source>
        <dbReference type="PROSITE-ProRule" id="PRU01007"/>
    </source>
</evidence>
<evidence type="ECO:0000255" key="2">
    <source>
        <dbReference type="PROSITE-ProRule" id="PRU01175"/>
    </source>
</evidence>
<evidence type="ECO:0000255" key="3">
    <source>
        <dbReference type="PROSITE-ProRule" id="PRU01228"/>
    </source>
</evidence>
<evidence type="ECO:0000269" key="4">
    <source>
    </source>
</evidence>
<evidence type="ECO:0000269" key="5">
    <source>
    </source>
</evidence>
<evidence type="ECO:0000269" key="6">
    <source>
    </source>
</evidence>
<evidence type="ECO:0000269" key="7">
    <source>
    </source>
</evidence>
<evidence type="ECO:0000305" key="8"/>
<gene>
    <name type="primary">relA</name>
    <name type="ordered locus">b2784</name>
    <name type="ordered locus">JW2755</name>
</gene>